<gene>
    <name type="primary">ssb</name>
    <name type="ordered locus">MSMEG_6896</name>
    <name type="ordered locus">MSMEI_6712</name>
</gene>
<accession>Q9AFI5</accession>
<accession>A0R7F8</accession>
<accession>I7FVY6</accession>
<feature type="chain" id="PRO_0000096068" description="Single-stranded DNA-binding protein">
    <location>
        <begin position="1"/>
        <end position="165"/>
    </location>
</feature>
<feature type="domain" description="SSB" evidence="1">
    <location>
        <begin position="1"/>
        <end position="110"/>
    </location>
</feature>
<feature type="region of interest" description="Disordered" evidence="2">
    <location>
        <begin position="117"/>
        <end position="165"/>
    </location>
</feature>
<feature type="compositionally biased region" description="Gly residues" evidence="2">
    <location>
        <begin position="123"/>
        <end position="137"/>
    </location>
</feature>
<feature type="compositionally biased region" description="Low complexity" evidence="2">
    <location>
        <begin position="148"/>
        <end position="158"/>
    </location>
</feature>
<feature type="strand" evidence="6">
    <location>
        <begin position="6"/>
        <end position="15"/>
    </location>
</feature>
<feature type="strand" evidence="6">
    <location>
        <begin position="18"/>
        <end position="21"/>
    </location>
</feature>
<feature type="strand" evidence="6">
    <location>
        <begin position="27"/>
        <end position="34"/>
    </location>
</feature>
<feature type="strand" evidence="7">
    <location>
        <begin position="42"/>
        <end position="44"/>
    </location>
</feature>
<feature type="strand" evidence="6">
    <location>
        <begin position="54"/>
        <end position="60"/>
    </location>
</feature>
<feature type="helix" evidence="6">
    <location>
        <begin position="62"/>
        <end position="70"/>
    </location>
</feature>
<feature type="strand" evidence="6">
    <location>
        <begin position="76"/>
        <end position="89"/>
    </location>
</feature>
<feature type="strand" evidence="6">
    <location>
        <begin position="95"/>
        <end position="108"/>
    </location>
</feature>
<feature type="strand" evidence="6">
    <location>
        <begin position="110"/>
        <end position="119"/>
    </location>
</feature>
<dbReference type="EMBL" id="AF349434">
    <property type="protein sequence ID" value="AAK30583.1"/>
    <property type="molecule type" value="Genomic_DNA"/>
</dbReference>
<dbReference type="EMBL" id="CP000480">
    <property type="protein sequence ID" value="ABK71618.1"/>
    <property type="molecule type" value="Genomic_DNA"/>
</dbReference>
<dbReference type="EMBL" id="CP001663">
    <property type="protein sequence ID" value="AFP43138.1"/>
    <property type="molecule type" value="Genomic_DNA"/>
</dbReference>
<dbReference type="RefSeq" id="WP_003898320.1">
    <property type="nucleotide sequence ID" value="NZ_SIJM01000001.1"/>
</dbReference>
<dbReference type="RefSeq" id="YP_891096.1">
    <property type="nucleotide sequence ID" value="NC_008596.1"/>
</dbReference>
<dbReference type="PDB" id="1X3E">
    <property type="method" value="X-ray"/>
    <property type="resolution" value="2.15 A"/>
    <property type="chains" value="A/B=1-165"/>
</dbReference>
<dbReference type="PDB" id="1X3F">
    <property type="method" value="X-ray"/>
    <property type="resolution" value="2.70 A"/>
    <property type="chains" value="A/B=1-165"/>
</dbReference>
<dbReference type="PDB" id="1X3G">
    <property type="method" value="X-ray"/>
    <property type="resolution" value="3.00 A"/>
    <property type="chains" value="A/B=1-165"/>
</dbReference>
<dbReference type="PDB" id="3A5U">
    <property type="method" value="X-ray"/>
    <property type="resolution" value="2.80 A"/>
    <property type="chains" value="A/B=1-130"/>
</dbReference>
<dbReference type="PDBsum" id="1X3E"/>
<dbReference type="PDBsum" id="1X3F"/>
<dbReference type="PDBsum" id="1X3G"/>
<dbReference type="PDBsum" id="3A5U"/>
<dbReference type="SMR" id="Q9AFI5"/>
<dbReference type="STRING" id="246196.MSMEG_6896"/>
<dbReference type="PaxDb" id="246196-MSMEI_6712"/>
<dbReference type="KEGG" id="msb:LJ00_34075"/>
<dbReference type="KEGG" id="msg:MSMEI_6712"/>
<dbReference type="KEGG" id="msm:MSMEG_6896"/>
<dbReference type="PATRIC" id="fig|246196.19.peg.6717"/>
<dbReference type="eggNOG" id="COG0629">
    <property type="taxonomic scope" value="Bacteria"/>
</dbReference>
<dbReference type="OrthoDB" id="9809878at2"/>
<dbReference type="EvolutionaryTrace" id="Q9AFI5"/>
<dbReference type="Proteomes" id="UP000000757">
    <property type="component" value="Chromosome"/>
</dbReference>
<dbReference type="Proteomes" id="UP000006158">
    <property type="component" value="Chromosome"/>
</dbReference>
<dbReference type="GO" id="GO:0009295">
    <property type="term" value="C:nucleoid"/>
    <property type="evidence" value="ECO:0007669"/>
    <property type="project" value="TreeGrafter"/>
</dbReference>
<dbReference type="GO" id="GO:0003697">
    <property type="term" value="F:single-stranded DNA binding"/>
    <property type="evidence" value="ECO:0007669"/>
    <property type="project" value="UniProtKB-UniRule"/>
</dbReference>
<dbReference type="GO" id="GO:0006260">
    <property type="term" value="P:DNA replication"/>
    <property type="evidence" value="ECO:0007669"/>
    <property type="project" value="InterPro"/>
</dbReference>
<dbReference type="CDD" id="cd04496">
    <property type="entry name" value="SSB_OBF"/>
    <property type="match status" value="1"/>
</dbReference>
<dbReference type="FunFam" id="2.40.50.140:FF:000057">
    <property type="entry name" value="Single-stranded DNA-binding protein"/>
    <property type="match status" value="1"/>
</dbReference>
<dbReference type="Gene3D" id="2.40.50.140">
    <property type="entry name" value="Nucleic acid-binding proteins"/>
    <property type="match status" value="1"/>
</dbReference>
<dbReference type="HAMAP" id="MF_00984">
    <property type="entry name" value="SSB"/>
    <property type="match status" value="1"/>
</dbReference>
<dbReference type="InterPro" id="IPR012340">
    <property type="entry name" value="NA-bd_OB-fold"/>
</dbReference>
<dbReference type="InterPro" id="IPR000424">
    <property type="entry name" value="Primosome_PriB/ssb"/>
</dbReference>
<dbReference type="InterPro" id="IPR011344">
    <property type="entry name" value="ssDNA-bd"/>
</dbReference>
<dbReference type="NCBIfam" id="NF005851">
    <property type="entry name" value="PRK07772.1"/>
    <property type="match status" value="1"/>
</dbReference>
<dbReference type="NCBIfam" id="TIGR00621">
    <property type="entry name" value="ssb"/>
    <property type="match status" value="1"/>
</dbReference>
<dbReference type="PANTHER" id="PTHR10302">
    <property type="entry name" value="SINGLE-STRANDED DNA-BINDING PROTEIN"/>
    <property type="match status" value="1"/>
</dbReference>
<dbReference type="PANTHER" id="PTHR10302:SF27">
    <property type="entry name" value="SINGLE-STRANDED DNA-BINDING PROTEIN"/>
    <property type="match status" value="1"/>
</dbReference>
<dbReference type="Pfam" id="PF00436">
    <property type="entry name" value="SSB"/>
    <property type="match status" value="1"/>
</dbReference>
<dbReference type="SUPFAM" id="SSF50249">
    <property type="entry name" value="Nucleic acid-binding proteins"/>
    <property type="match status" value="1"/>
</dbReference>
<dbReference type="PROSITE" id="PS50935">
    <property type="entry name" value="SSB"/>
    <property type="match status" value="1"/>
</dbReference>
<name>SSB_MYCS2</name>
<proteinExistence type="evidence at protein level"/>
<organism>
    <name type="scientific">Mycolicibacterium smegmatis (strain ATCC 700084 / mc(2)155)</name>
    <name type="common">Mycobacterium smegmatis</name>
    <dbReference type="NCBI Taxonomy" id="246196"/>
    <lineage>
        <taxon>Bacteria</taxon>
        <taxon>Bacillati</taxon>
        <taxon>Actinomycetota</taxon>
        <taxon>Actinomycetes</taxon>
        <taxon>Mycobacteriales</taxon>
        <taxon>Mycobacteriaceae</taxon>
        <taxon>Mycolicibacterium</taxon>
    </lineage>
</organism>
<reference key="1">
    <citation type="journal article" date="2001" name="J. Biol. Chem.">
        <title>Characterization of single-stranded DNA-binding proteins from Mycobacteria. The carboxyl-terminal of domain of SSB is essential for stable association with its cognate RecA protein.</title>
        <authorList>
            <person name="Reddy M.S."/>
            <person name="Guhan N."/>
            <person name="Muniyappa K."/>
        </authorList>
    </citation>
    <scope>NUCLEOTIDE SEQUENCE [GENOMIC DNA]</scope>
    <scope>INTERACTION WITH RECA</scope>
</reference>
<reference key="2">
    <citation type="submission" date="2006-10" db="EMBL/GenBank/DDBJ databases">
        <authorList>
            <person name="Fleischmann R.D."/>
            <person name="Dodson R.J."/>
            <person name="Haft D.H."/>
            <person name="Merkel J.S."/>
            <person name="Nelson W.C."/>
            <person name="Fraser C.M."/>
        </authorList>
    </citation>
    <scope>NUCLEOTIDE SEQUENCE [LARGE SCALE GENOMIC DNA]</scope>
    <source>
        <strain>ATCC 700084 / mc(2)155</strain>
    </source>
</reference>
<reference key="3">
    <citation type="journal article" date="2007" name="Genome Biol.">
        <title>Interrupted coding sequences in Mycobacterium smegmatis: authentic mutations or sequencing errors?</title>
        <authorList>
            <person name="Deshayes C."/>
            <person name="Perrodou E."/>
            <person name="Gallien S."/>
            <person name="Euphrasie D."/>
            <person name="Schaeffer C."/>
            <person name="Van-Dorsselaer A."/>
            <person name="Poch O."/>
            <person name="Lecompte O."/>
            <person name="Reyrat J.-M."/>
        </authorList>
    </citation>
    <scope>NUCLEOTIDE SEQUENCE [LARGE SCALE GENOMIC DNA]</scope>
    <source>
        <strain>ATCC 700084 / mc(2)155</strain>
    </source>
</reference>
<reference key="4">
    <citation type="journal article" date="2009" name="Genome Res.">
        <title>Ortho-proteogenomics: multiple proteomes investigation through orthology and a new MS-based protocol.</title>
        <authorList>
            <person name="Gallien S."/>
            <person name="Perrodou E."/>
            <person name="Carapito C."/>
            <person name="Deshayes C."/>
            <person name="Reyrat J.-M."/>
            <person name="Van Dorsselaer A."/>
            <person name="Poch O."/>
            <person name="Schaeffer C."/>
            <person name="Lecompte O."/>
        </authorList>
    </citation>
    <scope>NUCLEOTIDE SEQUENCE [LARGE SCALE GENOMIC DNA]</scope>
    <source>
        <strain>ATCC 700084 / mc(2)155</strain>
    </source>
</reference>
<reference key="5">
    <citation type="journal article" date="2005" name="Acta Crystallogr. D">
        <title>Structure of Mycobacterium smegmatis single-stranded DNA-binding protein and a comparative study involving homologous SSBs: biological implications of structural plasticity and variability in quaternary association.</title>
        <authorList>
            <person name="Saikrishnan K."/>
            <person name="Manjunath G.P."/>
            <person name="Singh P."/>
            <person name="Jeyakanthan J."/>
            <person name="Dauter Z."/>
            <person name="Sekar K."/>
            <person name="Muniyappa K."/>
            <person name="Vijayan M."/>
        </authorList>
    </citation>
    <scope>X-RAY CRYSTALLOGRAPHY (2.15 ANGSTROMS)</scope>
    <scope>SUBUNIT</scope>
</reference>
<reference key="6">
    <citation type="submission" date="2009-08" db="PDB data bank">
        <title>Promiscuity and specificity in DNA binding to SSB: Insights from the structure of the Mycobacterium smegmatis SSB-ssDNA complex.</title>
        <authorList>
            <person name="Kaushal P.S."/>
            <person name="Manjunath G.P."/>
            <person name="Sekar K."/>
            <person name="Muniyappa K."/>
            <person name="Vijayan M."/>
        </authorList>
    </citation>
    <scope>X-RAY CRYSTALLOGRAPHY (2.80 ANGSTROMS) OF 1-130 IN COMPLEX WITH SSDNA</scope>
</reference>
<evidence type="ECO:0000255" key="1">
    <source>
        <dbReference type="HAMAP-Rule" id="MF_00984"/>
    </source>
</evidence>
<evidence type="ECO:0000256" key="2">
    <source>
        <dbReference type="SAM" id="MobiDB-lite"/>
    </source>
</evidence>
<evidence type="ECO:0000269" key="3">
    <source>
    </source>
</evidence>
<evidence type="ECO:0000269" key="4">
    <source>
    </source>
</evidence>
<evidence type="ECO:0000269" key="5">
    <source ref="6"/>
</evidence>
<evidence type="ECO:0007829" key="6">
    <source>
        <dbReference type="PDB" id="1X3E"/>
    </source>
</evidence>
<evidence type="ECO:0007829" key="7">
    <source>
        <dbReference type="PDB" id="1X3F"/>
    </source>
</evidence>
<keyword id="KW-0002">3D-structure</keyword>
<keyword id="KW-0238">DNA-binding</keyword>
<keyword id="KW-1185">Reference proteome</keyword>
<protein>
    <recommendedName>
        <fullName evidence="1">Single-stranded DNA-binding protein</fullName>
        <shortName evidence="1">SSB</shortName>
    </recommendedName>
</protein>
<sequence>MAGDTTITVVGNLTADPELRFTPSGAAVANFTVASTPRMFDRQSGEWKDGEALFLRCNIWREAAENVAESLTRGSRVIVTGRLKQRSFETREGEKRTVVEVEVDEIGPSLRYATAKVNKASRSGGGGGGFGSGGGGSRQSEPKDDPWGSAPASGSFSGADDEPPF</sequence>
<comment type="subunit">
    <text evidence="1 3 4 5">Homotetramer. Interacts with RecA.</text>
</comment>